<protein>
    <recommendedName>
        <fullName evidence="1">D-aminoacyl-tRNA deacylase</fullName>
        <ecNumber evidence="1">3.1.1.96</ecNumber>
    </recommendedName>
    <alternativeName>
        <fullName>D-tyrosyl-tRNA(Tyr) deacylase</fullName>
    </alternativeName>
</protein>
<reference key="1">
    <citation type="journal article" date="1996" name="Science">
        <title>Complete genome sequence of the methanogenic archaeon, Methanococcus jannaschii.</title>
        <authorList>
            <person name="Bult C.J."/>
            <person name="White O."/>
            <person name="Olsen G.J."/>
            <person name="Zhou L."/>
            <person name="Fleischmann R.D."/>
            <person name="Sutton G.G."/>
            <person name="Blake J.A."/>
            <person name="FitzGerald L.M."/>
            <person name="Clayton R.A."/>
            <person name="Gocayne J.D."/>
            <person name="Kerlavage A.R."/>
            <person name="Dougherty B.A."/>
            <person name="Tomb J.-F."/>
            <person name="Adams M.D."/>
            <person name="Reich C.I."/>
            <person name="Overbeek R."/>
            <person name="Kirkness E.F."/>
            <person name="Weinstock K.G."/>
            <person name="Merrick J.M."/>
            <person name="Glodek A."/>
            <person name="Scott J.L."/>
            <person name="Geoghagen N.S.M."/>
            <person name="Weidman J.F."/>
            <person name="Fuhrmann J.L."/>
            <person name="Nguyen D."/>
            <person name="Utterback T.R."/>
            <person name="Kelley J.M."/>
            <person name="Peterson J.D."/>
            <person name="Sadow P.W."/>
            <person name="Hanna M.C."/>
            <person name="Cotton M.D."/>
            <person name="Roberts K.M."/>
            <person name="Hurst M.A."/>
            <person name="Kaine B.P."/>
            <person name="Borodovsky M."/>
            <person name="Klenk H.-P."/>
            <person name="Fraser C.M."/>
            <person name="Smith H.O."/>
            <person name="Woese C.R."/>
            <person name="Venter J.C."/>
        </authorList>
    </citation>
    <scope>NUCLEOTIDE SEQUENCE [LARGE SCALE GENOMIC DNA]</scope>
    <source>
        <strain>ATCC 43067 / DSM 2661 / JAL-1 / JCM 10045 / NBRC 100440</strain>
    </source>
</reference>
<accession>Q57630</accession>
<gene>
    <name evidence="1" type="primary">dtdA</name>
    <name type="ordered locus">MJ0166</name>
</gene>
<dbReference type="EC" id="3.1.1.96" evidence="1"/>
<dbReference type="EMBL" id="L77117">
    <property type="protein sequence ID" value="AAB98148.1"/>
    <property type="molecule type" value="Genomic_DNA"/>
</dbReference>
<dbReference type="PIR" id="G64320">
    <property type="entry name" value="G64320"/>
</dbReference>
<dbReference type="RefSeq" id="WP_010869661.1">
    <property type="nucleotide sequence ID" value="NC_000909.1"/>
</dbReference>
<dbReference type="SMR" id="Q57630"/>
<dbReference type="FunCoup" id="Q57630">
    <property type="interactions" value="3"/>
</dbReference>
<dbReference type="STRING" id="243232.MJ_0166"/>
<dbReference type="PaxDb" id="243232-MJ_0166"/>
<dbReference type="EnsemblBacteria" id="AAB98148">
    <property type="protein sequence ID" value="AAB98148"/>
    <property type="gene ID" value="MJ_0166"/>
</dbReference>
<dbReference type="GeneID" id="1451013"/>
<dbReference type="KEGG" id="mja:MJ_0166"/>
<dbReference type="eggNOG" id="arCOG01616">
    <property type="taxonomic scope" value="Archaea"/>
</dbReference>
<dbReference type="HOGENOM" id="CLU_056464_1_0_2"/>
<dbReference type="InParanoid" id="Q57630"/>
<dbReference type="OrthoDB" id="9863at2157"/>
<dbReference type="PhylomeDB" id="Q57630"/>
<dbReference type="Proteomes" id="UP000000805">
    <property type="component" value="Chromosome"/>
</dbReference>
<dbReference type="GO" id="GO:0051499">
    <property type="term" value="F:D-aminoacyl-tRNA deacylase activity"/>
    <property type="evidence" value="ECO:0000318"/>
    <property type="project" value="GO_Central"/>
</dbReference>
<dbReference type="GO" id="GO:0008270">
    <property type="term" value="F:zinc ion binding"/>
    <property type="evidence" value="ECO:0007669"/>
    <property type="project" value="UniProtKB-UniRule"/>
</dbReference>
<dbReference type="GO" id="GO:0019478">
    <property type="term" value="P:D-amino acid catabolic process"/>
    <property type="evidence" value="ECO:0007669"/>
    <property type="project" value="UniProtKB-UniRule"/>
</dbReference>
<dbReference type="FunFam" id="3.40.50.10700:FF:000002">
    <property type="entry name" value="D-aminoacyl-tRNA deacylase"/>
    <property type="match status" value="1"/>
</dbReference>
<dbReference type="Gene3D" id="3.40.50.10700">
    <property type="entry name" value="AF0625-like"/>
    <property type="match status" value="1"/>
</dbReference>
<dbReference type="Gene3D" id="3.40.630.50">
    <property type="entry name" value="AF0625-like"/>
    <property type="match status" value="1"/>
</dbReference>
<dbReference type="HAMAP" id="MF_00562">
    <property type="entry name" value="Deacylase_DtdA"/>
    <property type="match status" value="1"/>
</dbReference>
<dbReference type="InterPro" id="IPR018033">
    <property type="entry name" value="Deacylase_DtdA_archaea"/>
</dbReference>
<dbReference type="InterPro" id="IPR007508">
    <property type="entry name" value="DtdA"/>
</dbReference>
<dbReference type="NCBIfam" id="NF003071">
    <property type="entry name" value="PRK03995.1-3"/>
    <property type="match status" value="1"/>
</dbReference>
<dbReference type="PANTHER" id="PTHR34667">
    <property type="entry name" value="D-AMINOACYL-TRNA DEACYLASE"/>
    <property type="match status" value="1"/>
</dbReference>
<dbReference type="PANTHER" id="PTHR34667:SF1">
    <property type="entry name" value="D-AMINOACYL-TRNA DEACYLASE"/>
    <property type="match status" value="1"/>
</dbReference>
<dbReference type="Pfam" id="PF04414">
    <property type="entry name" value="tRNA_deacylase"/>
    <property type="match status" value="1"/>
</dbReference>
<dbReference type="PIRSF" id="PIRSF016210">
    <property type="entry name" value="UCP016210"/>
    <property type="match status" value="1"/>
</dbReference>
<dbReference type="SUPFAM" id="SSF142535">
    <property type="entry name" value="AF0625-like"/>
    <property type="match status" value="1"/>
</dbReference>
<name>DTDA_METJA</name>
<proteinExistence type="inferred from homology"/>
<evidence type="ECO:0000255" key="1">
    <source>
        <dbReference type="HAMAP-Rule" id="MF_00562"/>
    </source>
</evidence>
<feature type="chain" id="PRO_0000158966" description="D-aminoacyl-tRNA deacylase">
    <location>
        <begin position="1"/>
        <end position="255"/>
    </location>
</feature>
<organism>
    <name type="scientific">Methanocaldococcus jannaschii (strain ATCC 43067 / DSM 2661 / JAL-1 / JCM 10045 / NBRC 100440)</name>
    <name type="common">Methanococcus jannaschii</name>
    <dbReference type="NCBI Taxonomy" id="243232"/>
    <lineage>
        <taxon>Archaea</taxon>
        <taxon>Methanobacteriati</taxon>
        <taxon>Methanobacteriota</taxon>
        <taxon>Methanomada group</taxon>
        <taxon>Methanococci</taxon>
        <taxon>Methanococcales</taxon>
        <taxon>Methanocaldococcaceae</taxon>
        <taxon>Methanocaldococcus</taxon>
    </lineage>
</organism>
<keyword id="KW-0378">Hydrolase</keyword>
<keyword id="KW-0479">Metal-binding</keyword>
<keyword id="KW-1185">Reference proteome</keyword>
<keyword id="KW-0862">Zinc</keyword>
<sequence>MKFLLIASNKDLASKNIANHIKEYFDVFETDKELLSLTAEDLEYADYYIFLSKHKSIANKPSLTVHTPGNLTEDNTFGGNPKEVCPCDAVLNTLLLKNIYKNYKTYYEDGKIGEFDVSFEVVHHSPTGLKAPTVFVEIGSSEKEWILKEAGEIIAKSVLETIDAMKSKNYDKKVRAIGFGGGHYAPKFTKLALEDKYYFGYLVPKYASVSEDVLNQLISKMEVDKALIDWKGCRGDDKRRYIEFFENNGIEWERV</sequence>
<comment type="function">
    <text evidence="1">D-aminoacyl-tRNA deacylase with broad substrate specificity. By recycling D-aminoacyl-tRNA to D-amino acids and free tRNA molecules, this enzyme counteracts the toxicity associated with the formation of D-aminoacyl-tRNA entities in vivo.</text>
</comment>
<comment type="catalytic activity">
    <reaction evidence="1">
        <text>a D-aminoacyl-tRNA + H2O = a tRNA + a D-alpha-amino acid + H(+)</text>
        <dbReference type="Rhea" id="RHEA:13953"/>
        <dbReference type="Rhea" id="RHEA-COMP:10123"/>
        <dbReference type="Rhea" id="RHEA-COMP:10124"/>
        <dbReference type="ChEBI" id="CHEBI:15377"/>
        <dbReference type="ChEBI" id="CHEBI:15378"/>
        <dbReference type="ChEBI" id="CHEBI:59871"/>
        <dbReference type="ChEBI" id="CHEBI:78442"/>
        <dbReference type="ChEBI" id="CHEBI:79333"/>
        <dbReference type="EC" id="3.1.1.96"/>
    </reaction>
</comment>
<comment type="catalytic activity">
    <reaction evidence="1">
        <text>glycyl-tRNA(Ala) + H2O = tRNA(Ala) + glycine + H(+)</text>
        <dbReference type="Rhea" id="RHEA:53744"/>
        <dbReference type="Rhea" id="RHEA-COMP:9657"/>
        <dbReference type="Rhea" id="RHEA-COMP:13640"/>
        <dbReference type="ChEBI" id="CHEBI:15377"/>
        <dbReference type="ChEBI" id="CHEBI:15378"/>
        <dbReference type="ChEBI" id="CHEBI:57305"/>
        <dbReference type="ChEBI" id="CHEBI:78442"/>
        <dbReference type="ChEBI" id="CHEBI:78522"/>
        <dbReference type="EC" id="3.1.1.96"/>
    </reaction>
</comment>
<comment type="cofactor">
    <cofactor evidence="1">
        <name>Zn(2+)</name>
        <dbReference type="ChEBI" id="CHEBI:29105"/>
    </cofactor>
    <text evidence="1">Binds 2 Zn(2+) ions per subunit.</text>
</comment>
<comment type="subunit">
    <text evidence="1">Monomer.</text>
</comment>
<comment type="similarity">
    <text evidence="1">Belongs to the DtdA deacylase family.</text>
</comment>